<dbReference type="EC" id="6.3.4.4" evidence="1"/>
<dbReference type="EMBL" id="CP001279">
    <property type="protein sequence ID" value="ACM93517.1"/>
    <property type="molecule type" value="Genomic_DNA"/>
</dbReference>
<dbReference type="RefSeq" id="WP_015902569.1">
    <property type="nucleotide sequence ID" value="NC_012115.1"/>
</dbReference>
<dbReference type="SMR" id="B9L6S4"/>
<dbReference type="STRING" id="598659.NAMH_1682"/>
<dbReference type="KEGG" id="nam:NAMH_1682"/>
<dbReference type="eggNOG" id="COG0104">
    <property type="taxonomic scope" value="Bacteria"/>
</dbReference>
<dbReference type="HOGENOM" id="CLU_029848_0_0_7"/>
<dbReference type="OrthoDB" id="9807553at2"/>
<dbReference type="UniPathway" id="UPA00075">
    <property type="reaction ID" value="UER00335"/>
</dbReference>
<dbReference type="Proteomes" id="UP000000448">
    <property type="component" value="Chromosome"/>
</dbReference>
<dbReference type="GO" id="GO:0005737">
    <property type="term" value="C:cytoplasm"/>
    <property type="evidence" value="ECO:0007669"/>
    <property type="project" value="UniProtKB-SubCell"/>
</dbReference>
<dbReference type="GO" id="GO:0004019">
    <property type="term" value="F:adenylosuccinate synthase activity"/>
    <property type="evidence" value="ECO:0007669"/>
    <property type="project" value="UniProtKB-UniRule"/>
</dbReference>
<dbReference type="GO" id="GO:0005525">
    <property type="term" value="F:GTP binding"/>
    <property type="evidence" value="ECO:0007669"/>
    <property type="project" value="UniProtKB-UniRule"/>
</dbReference>
<dbReference type="GO" id="GO:0000287">
    <property type="term" value="F:magnesium ion binding"/>
    <property type="evidence" value="ECO:0007669"/>
    <property type="project" value="UniProtKB-UniRule"/>
</dbReference>
<dbReference type="GO" id="GO:0044208">
    <property type="term" value="P:'de novo' AMP biosynthetic process"/>
    <property type="evidence" value="ECO:0007669"/>
    <property type="project" value="UniProtKB-UniRule"/>
</dbReference>
<dbReference type="GO" id="GO:0046040">
    <property type="term" value="P:IMP metabolic process"/>
    <property type="evidence" value="ECO:0007669"/>
    <property type="project" value="TreeGrafter"/>
</dbReference>
<dbReference type="CDD" id="cd03108">
    <property type="entry name" value="AdSS"/>
    <property type="match status" value="1"/>
</dbReference>
<dbReference type="FunFam" id="1.10.300.10:FF:000001">
    <property type="entry name" value="Adenylosuccinate synthetase"/>
    <property type="match status" value="1"/>
</dbReference>
<dbReference type="FunFam" id="3.90.170.10:FF:000001">
    <property type="entry name" value="Adenylosuccinate synthetase"/>
    <property type="match status" value="1"/>
</dbReference>
<dbReference type="Gene3D" id="3.40.440.10">
    <property type="entry name" value="Adenylosuccinate Synthetase, subunit A, domain 1"/>
    <property type="match status" value="1"/>
</dbReference>
<dbReference type="Gene3D" id="1.10.300.10">
    <property type="entry name" value="Adenylosuccinate Synthetase, subunit A, domain 2"/>
    <property type="match status" value="1"/>
</dbReference>
<dbReference type="Gene3D" id="3.90.170.10">
    <property type="entry name" value="Adenylosuccinate Synthetase, subunit A, domain 3"/>
    <property type="match status" value="1"/>
</dbReference>
<dbReference type="HAMAP" id="MF_00011">
    <property type="entry name" value="Adenylosucc_synth"/>
    <property type="match status" value="1"/>
</dbReference>
<dbReference type="InterPro" id="IPR018220">
    <property type="entry name" value="Adenylosuccin_syn_GTP-bd"/>
</dbReference>
<dbReference type="InterPro" id="IPR033128">
    <property type="entry name" value="Adenylosuccin_syn_Lys_AS"/>
</dbReference>
<dbReference type="InterPro" id="IPR042109">
    <property type="entry name" value="Adenylosuccinate_synth_dom1"/>
</dbReference>
<dbReference type="InterPro" id="IPR042110">
    <property type="entry name" value="Adenylosuccinate_synth_dom2"/>
</dbReference>
<dbReference type="InterPro" id="IPR042111">
    <property type="entry name" value="Adenylosuccinate_synth_dom3"/>
</dbReference>
<dbReference type="InterPro" id="IPR001114">
    <property type="entry name" value="Adenylosuccinate_synthetase"/>
</dbReference>
<dbReference type="InterPro" id="IPR027417">
    <property type="entry name" value="P-loop_NTPase"/>
</dbReference>
<dbReference type="NCBIfam" id="NF002223">
    <property type="entry name" value="PRK01117.1"/>
    <property type="match status" value="1"/>
</dbReference>
<dbReference type="NCBIfam" id="TIGR00184">
    <property type="entry name" value="purA"/>
    <property type="match status" value="1"/>
</dbReference>
<dbReference type="PANTHER" id="PTHR11846">
    <property type="entry name" value="ADENYLOSUCCINATE SYNTHETASE"/>
    <property type="match status" value="1"/>
</dbReference>
<dbReference type="PANTHER" id="PTHR11846:SF0">
    <property type="entry name" value="ADENYLOSUCCINATE SYNTHETASE"/>
    <property type="match status" value="1"/>
</dbReference>
<dbReference type="Pfam" id="PF00709">
    <property type="entry name" value="Adenylsucc_synt"/>
    <property type="match status" value="1"/>
</dbReference>
<dbReference type="SMART" id="SM00788">
    <property type="entry name" value="Adenylsucc_synt"/>
    <property type="match status" value="1"/>
</dbReference>
<dbReference type="SUPFAM" id="SSF52540">
    <property type="entry name" value="P-loop containing nucleoside triphosphate hydrolases"/>
    <property type="match status" value="1"/>
</dbReference>
<dbReference type="PROSITE" id="PS01266">
    <property type="entry name" value="ADENYLOSUCCIN_SYN_1"/>
    <property type="match status" value="1"/>
</dbReference>
<dbReference type="PROSITE" id="PS00513">
    <property type="entry name" value="ADENYLOSUCCIN_SYN_2"/>
    <property type="match status" value="1"/>
</dbReference>
<name>PURA_NAUPA</name>
<feature type="chain" id="PRO_1000194769" description="Adenylosuccinate synthetase">
    <location>
        <begin position="1"/>
        <end position="413"/>
    </location>
</feature>
<feature type="active site" description="Proton acceptor" evidence="1">
    <location>
        <position position="12"/>
    </location>
</feature>
<feature type="active site" description="Proton donor" evidence="1">
    <location>
        <position position="40"/>
    </location>
</feature>
<feature type="binding site" evidence="1">
    <location>
        <begin position="11"/>
        <end position="17"/>
    </location>
    <ligand>
        <name>GTP</name>
        <dbReference type="ChEBI" id="CHEBI:37565"/>
    </ligand>
</feature>
<feature type="binding site" description="in other chain" evidence="1">
    <location>
        <begin position="12"/>
        <end position="15"/>
    </location>
    <ligand>
        <name>IMP</name>
        <dbReference type="ChEBI" id="CHEBI:58053"/>
        <note>ligand shared between dimeric partners</note>
    </ligand>
</feature>
<feature type="binding site" evidence="1">
    <location>
        <position position="12"/>
    </location>
    <ligand>
        <name>Mg(2+)</name>
        <dbReference type="ChEBI" id="CHEBI:18420"/>
    </ligand>
</feature>
<feature type="binding site" description="in other chain" evidence="1">
    <location>
        <begin position="37"/>
        <end position="40"/>
    </location>
    <ligand>
        <name>IMP</name>
        <dbReference type="ChEBI" id="CHEBI:58053"/>
        <note>ligand shared between dimeric partners</note>
    </ligand>
</feature>
<feature type="binding site" evidence="1">
    <location>
        <begin position="39"/>
        <end position="41"/>
    </location>
    <ligand>
        <name>GTP</name>
        <dbReference type="ChEBI" id="CHEBI:37565"/>
    </ligand>
</feature>
<feature type="binding site" evidence="1">
    <location>
        <position position="39"/>
    </location>
    <ligand>
        <name>Mg(2+)</name>
        <dbReference type="ChEBI" id="CHEBI:18420"/>
    </ligand>
</feature>
<feature type="binding site" description="in other chain" evidence="1">
    <location>
        <position position="125"/>
    </location>
    <ligand>
        <name>IMP</name>
        <dbReference type="ChEBI" id="CHEBI:58053"/>
        <note>ligand shared between dimeric partners</note>
    </ligand>
</feature>
<feature type="binding site" evidence="1">
    <location>
        <position position="139"/>
    </location>
    <ligand>
        <name>IMP</name>
        <dbReference type="ChEBI" id="CHEBI:58053"/>
        <note>ligand shared between dimeric partners</note>
    </ligand>
</feature>
<feature type="binding site" description="in other chain" evidence="1">
    <location>
        <position position="217"/>
    </location>
    <ligand>
        <name>IMP</name>
        <dbReference type="ChEBI" id="CHEBI:58053"/>
        <note>ligand shared between dimeric partners</note>
    </ligand>
</feature>
<feature type="binding site" description="in other chain" evidence="1">
    <location>
        <position position="232"/>
    </location>
    <ligand>
        <name>IMP</name>
        <dbReference type="ChEBI" id="CHEBI:58053"/>
        <note>ligand shared between dimeric partners</note>
    </ligand>
</feature>
<feature type="binding site" evidence="1">
    <location>
        <begin position="292"/>
        <end position="298"/>
    </location>
    <ligand>
        <name>substrate</name>
    </ligand>
</feature>
<feature type="binding site" description="in other chain" evidence="1">
    <location>
        <position position="296"/>
    </location>
    <ligand>
        <name>IMP</name>
        <dbReference type="ChEBI" id="CHEBI:58053"/>
        <note>ligand shared between dimeric partners</note>
    </ligand>
</feature>
<feature type="binding site" evidence="1">
    <location>
        <position position="298"/>
    </location>
    <ligand>
        <name>GTP</name>
        <dbReference type="ChEBI" id="CHEBI:37565"/>
    </ligand>
</feature>
<feature type="binding site" evidence="1">
    <location>
        <begin position="324"/>
        <end position="326"/>
    </location>
    <ligand>
        <name>GTP</name>
        <dbReference type="ChEBI" id="CHEBI:37565"/>
    </ligand>
</feature>
<feature type="binding site" evidence="1">
    <location>
        <begin position="402"/>
        <end position="404"/>
    </location>
    <ligand>
        <name>GTP</name>
        <dbReference type="ChEBI" id="CHEBI:37565"/>
    </ligand>
</feature>
<evidence type="ECO:0000255" key="1">
    <source>
        <dbReference type="HAMAP-Rule" id="MF_00011"/>
    </source>
</evidence>
<proteinExistence type="inferred from homology"/>
<comment type="function">
    <text evidence="1">Plays an important role in the de novo pathway of purine nucleotide biosynthesis. Catalyzes the first committed step in the biosynthesis of AMP from IMP.</text>
</comment>
<comment type="catalytic activity">
    <reaction evidence="1">
        <text>IMP + L-aspartate + GTP = N(6)-(1,2-dicarboxyethyl)-AMP + GDP + phosphate + 2 H(+)</text>
        <dbReference type="Rhea" id="RHEA:15753"/>
        <dbReference type="ChEBI" id="CHEBI:15378"/>
        <dbReference type="ChEBI" id="CHEBI:29991"/>
        <dbReference type="ChEBI" id="CHEBI:37565"/>
        <dbReference type="ChEBI" id="CHEBI:43474"/>
        <dbReference type="ChEBI" id="CHEBI:57567"/>
        <dbReference type="ChEBI" id="CHEBI:58053"/>
        <dbReference type="ChEBI" id="CHEBI:58189"/>
        <dbReference type="EC" id="6.3.4.4"/>
    </reaction>
</comment>
<comment type="cofactor">
    <cofactor evidence="1">
        <name>Mg(2+)</name>
        <dbReference type="ChEBI" id="CHEBI:18420"/>
    </cofactor>
    <text evidence="1">Binds 1 Mg(2+) ion per subunit.</text>
</comment>
<comment type="pathway">
    <text evidence="1">Purine metabolism; AMP biosynthesis via de novo pathway; AMP from IMP: step 1/2.</text>
</comment>
<comment type="subunit">
    <text evidence="1">Homodimer.</text>
</comment>
<comment type="subcellular location">
    <subcellularLocation>
        <location evidence="1">Cytoplasm</location>
    </subcellularLocation>
</comment>
<comment type="similarity">
    <text evidence="1">Belongs to the adenylosuccinate synthetase family.</text>
</comment>
<gene>
    <name evidence="1" type="primary">purA</name>
    <name type="ordered locus">NAMH_1682</name>
</gene>
<reference key="1">
    <citation type="journal article" date="2009" name="PLoS Genet.">
        <title>Adaptations to submarine hydrothermal environments exemplified by the genome of Nautilia profundicola.</title>
        <authorList>
            <person name="Campbell B.J."/>
            <person name="Smith J.L."/>
            <person name="Hanson T.E."/>
            <person name="Klotz M.G."/>
            <person name="Stein L.Y."/>
            <person name="Lee C.K."/>
            <person name="Wu D."/>
            <person name="Robinson J.M."/>
            <person name="Khouri H.M."/>
            <person name="Eisen J.A."/>
            <person name="Cary S.C."/>
        </authorList>
    </citation>
    <scope>NUCLEOTIDE SEQUENCE [LARGE SCALE GENOMIC DNA]</scope>
    <source>
        <strain>ATCC BAA-1463 / DSM 18972 / AmH</strain>
    </source>
</reference>
<keyword id="KW-0963">Cytoplasm</keyword>
<keyword id="KW-0342">GTP-binding</keyword>
<keyword id="KW-0436">Ligase</keyword>
<keyword id="KW-0460">Magnesium</keyword>
<keyword id="KW-0479">Metal-binding</keyword>
<keyword id="KW-0547">Nucleotide-binding</keyword>
<keyword id="KW-0658">Purine biosynthesis</keyword>
<protein>
    <recommendedName>
        <fullName evidence="1">Adenylosuccinate synthetase</fullName>
        <shortName evidence="1">AMPSase</shortName>
        <shortName evidence="1">AdSS</shortName>
        <ecNumber evidence="1">6.3.4.4</ecNumber>
    </recommendedName>
    <alternativeName>
        <fullName evidence="1">IMP--aspartate ligase</fullName>
    </alternativeName>
</protein>
<accession>B9L6S4</accession>
<organism>
    <name type="scientific">Nautilia profundicola (strain ATCC BAA-1463 / DSM 18972 / AmH)</name>
    <dbReference type="NCBI Taxonomy" id="598659"/>
    <lineage>
        <taxon>Bacteria</taxon>
        <taxon>Pseudomonadati</taxon>
        <taxon>Campylobacterota</taxon>
        <taxon>Epsilonproteobacteria</taxon>
        <taxon>Nautiliales</taxon>
        <taxon>Nautiliaceae</taxon>
        <taxon>Nautilia</taxon>
    </lineage>
</organism>
<sequence length="413" mass="45627">MVDLIVGLQWGDEGKGKIVDLVAKNYDIVIRSQGGHNAGHTVVVDGKKYALHLLPSGVLNPNATNVIGNGVVVYPKQLIKEIRSFEHNIKEKLLISDKAHMILDHHIAIDQAREKLRGKNAIGTTGRGIGPAYADKIARVGVRMGELRNIPKLIEKLVHYYEMNKGYFDYLGIEIPSISKLEEELKEYKQELGSLITNTTQYLWDNMDKNMLLEGAQATLLDIDHGTYPYVTSSNTIASGALTGSGIAPKNLNKVIGIAKAYATRVGNGPFPTEDDGKAGDKIREQGGEYGTTTGRPRRCGWFDVVAARYAVTLNGCDEVAVMKLDVLDGFDKVKVCVGYEIDGEKIDYFPSELDDVKPVYVELDGWDGSVHVTKWEDLPKNAQKYIEFIEEKIGTKIKYVSTGAERNATVIR</sequence>